<proteinExistence type="inferred from homology"/>
<accession>C1MR42</accession>
<comment type="function">
    <text evidence="1">Catalyzes the attachment of alanine to tRNA(Ala) in a two-step reaction: alanine is first activated by ATP to form Ala-AMP and then transferred to the acceptor end of tRNA(Ala). Also edits incorrectly charged tRNA(Ala) via its editing domain.</text>
</comment>
<comment type="catalytic activity">
    <reaction evidence="1">
        <text>tRNA(Ala) + L-alanine + ATP = L-alanyl-tRNA(Ala) + AMP + diphosphate</text>
        <dbReference type="Rhea" id="RHEA:12540"/>
        <dbReference type="Rhea" id="RHEA-COMP:9657"/>
        <dbReference type="Rhea" id="RHEA-COMP:9923"/>
        <dbReference type="ChEBI" id="CHEBI:30616"/>
        <dbReference type="ChEBI" id="CHEBI:33019"/>
        <dbReference type="ChEBI" id="CHEBI:57972"/>
        <dbReference type="ChEBI" id="CHEBI:78442"/>
        <dbReference type="ChEBI" id="CHEBI:78497"/>
        <dbReference type="ChEBI" id="CHEBI:456215"/>
        <dbReference type="EC" id="6.1.1.7"/>
    </reaction>
</comment>
<comment type="cofactor">
    <cofactor evidence="1">
        <name>Zn(2+)</name>
        <dbReference type="ChEBI" id="CHEBI:29105"/>
    </cofactor>
    <text evidence="1">Binds 1 zinc ion per subunit.</text>
</comment>
<comment type="subunit">
    <text evidence="1">Monomer.</text>
</comment>
<comment type="subcellular location">
    <subcellularLocation>
        <location evidence="1">Plastid</location>
        <location evidence="1">Chloroplast</location>
    </subcellularLocation>
    <subcellularLocation>
        <location evidence="1">Mitochondrion</location>
    </subcellularLocation>
</comment>
<comment type="domain">
    <text evidence="1">Consists of three domains; the N-terminal catalytic domain, the editing domain and the C-terminal C-Ala domain. The editing domain removes incorrectly charged amino acids, while the C-Ala domain, along with tRNA(Ala), serves as a bridge to cooperatively bring together the editing and aminoacylation centers thus stimulating deacylation of misacylated tRNAs.</text>
</comment>
<comment type="similarity">
    <text evidence="1">Belongs to the class-II aminoacyl-tRNA synthetase family.</text>
</comment>
<evidence type="ECO:0000255" key="1">
    <source>
        <dbReference type="HAMAP-Rule" id="MF_03134"/>
    </source>
</evidence>
<dbReference type="EC" id="6.1.1.7" evidence="1"/>
<dbReference type="EMBL" id="GG663738">
    <property type="protein sequence ID" value="EEH57817.1"/>
    <property type="molecule type" value="Genomic_DNA"/>
</dbReference>
<dbReference type="RefSeq" id="XP_003057866.1">
    <property type="nucleotide sequence ID" value="XM_003057820.1"/>
</dbReference>
<dbReference type="SMR" id="C1MR42"/>
<dbReference type="STRING" id="564608.C1MR42"/>
<dbReference type="GeneID" id="9683676"/>
<dbReference type="KEGG" id="mpp:MICPUCDRAFT_16345"/>
<dbReference type="eggNOG" id="KOG0188">
    <property type="taxonomic scope" value="Eukaryota"/>
</dbReference>
<dbReference type="OMA" id="GFDMEME"/>
<dbReference type="OrthoDB" id="2423964at2759"/>
<dbReference type="Proteomes" id="UP000001876">
    <property type="component" value="Unassembled WGS sequence"/>
</dbReference>
<dbReference type="GO" id="GO:0009507">
    <property type="term" value="C:chloroplast"/>
    <property type="evidence" value="ECO:0007669"/>
    <property type="project" value="UniProtKB-SubCell"/>
</dbReference>
<dbReference type="GO" id="GO:0005829">
    <property type="term" value="C:cytosol"/>
    <property type="evidence" value="ECO:0007669"/>
    <property type="project" value="TreeGrafter"/>
</dbReference>
<dbReference type="GO" id="GO:0005739">
    <property type="term" value="C:mitochondrion"/>
    <property type="evidence" value="ECO:0007669"/>
    <property type="project" value="UniProtKB-SubCell"/>
</dbReference>
<dbReference type="GO" id="GO:0004813">
    <property type="term" value="F:alanine-tRNA ligase activity"/>
    <property type="evidence" value="ECO:0007669"/>
    <property type="project" value="UniProtKB-UniRule"/>
</dbReference>
<dbReference type="GO" id="GO:0002161">
    <property type="term" value="F:aminoacyl-tRNA deacylase activity"/>
    <property type="evidence" value="ECO:0007669"/>
    <property type="project" value="TreeGrafter"/>
</dbReference>
<dbReference type="GO" id="GO:0005524">
    <property type="term" value="F:ATP binding"/>
    <property type="evidence" value="ECO:0007669"/>
    <property type="project" value="UniProtKB-UniRule"/>
</dbReference>
<dbReference type="GO" id="GO:0000049">
    <property type="term" value="F:tRNA binding"/>
    <property type="evidence" value="ECO:0007669"/>
    <property type="project" value="UniProtKB-KW"/>
</dbReference>
<dbReference type="GO" id="GO:0008270">
    <property type="term" value="F:zinc ion binding"/>
    <property type="evidence" value="ECO:0007669"/>
    <property type="project" value="UniProtKB-UniRule"/>
</dbReference>
<dbReference type="GO" id="GO:0006419">
    <property type="term" value="P:alanyl-tRNA aminoacylation"/>
    <property type="evidence" value="ECO:0007669"/>
    <property type="project" value="UniProtKB-UniRule"/>
</dbReference>
<dbReference type="CDD" id="cd00673">
    <property type="entry name" value="AlaRS_core"/>
    <property type="match status" value="1"/>
</dbReference>
<dbReference type="FunFam" id="3.10.310.40:FF:000001">
    <property type="entry name" value="Alanine--tRNA ligase"/>
    <property type="match status" value="1"/>
</dbReference>
<dbReference type="FunFam" id="3.30.54.20:FF:000001">
    <property type="entry name" value="Alanine--tRNA ligase"/>
    <property type="match status" value="1"/>
</dbReference>
<dbReference type="FunFam" id="3.30.930.10:FF:000004">
    <property type="entry name" value="Alanine--tRNA ligase"/>
    <property type="match status" value="1"/>
</dbReference>
<dbReference type="FunFam" id="3.30.980.10:FF:000004">
    <property type="entry name" value="Alanine--tRNA ligase, cytoplasmic"/>
    <property type="match status" value="1"/>
</dbReference>
<dbReference type="Gene3D" id="2.40.30.130">
    <property type="match status" value="1"/>
</dbReference>
<dbReference type="Gene3D" id="3.10.310.40">
    <property type="match status" value="1"/>
</dbReference>
<dbReference type="Gene3D" id="3.30.54.20">
    <property type="match status" value="1"/>
</dbReference>
<dbReference type="Gene3D" id="6.10.250.550">
    <property type="match status" value="1"/>
</dbReference>
<dbReference type="Gene3D" id="3.30.930.10">
    <property type="entry name" value="Bira Bifunctional Protein, Domain 2"/>
    <property type="match status" value="1"/>
</dbReference>
<dbReference type="Gene3D" id="3.30.980.10">
    <property type="entry name" value="Threonyl-trna Synthetase, Chain A, domain 2"/>
    <property type="match status" value="1"/>
</dbReference>
<dbReference type="HAMAP" id="MF_00036_B">
    <property type="entry name" value="Ala_tRNA_synth_B"/>
    <property type="match status" value="1"/>
</dbReference>
<dbReference type="HAMAP" id="MF_03134">
    <property type="entry name" value="Ala_tRNA_synth_plantC"/>
    <property type="match status" value="1"/>
</dbReference>
<dbReference type="InterPro" id="IPR045864">
    <property type="entry name" value="aa-tRNA-synth_II/BPL/LPL"/>
</dbReference>
<dbReference type="InterPro" id="IPR002318">
    <property type="entry name" value="Ala-tRNA-lgiase_IIc"/>
</dbReference>
<dbReference type="InterPro" id="IPR018162">
    <property type="entry name" value="Ala-tRNA-ligase_IIc_anticod-bd"/>
</dbReference>
<dbReference type="InterPro" id="IPR018165">
    <property type="entry name" value="Ala-tRNA-synth_IIc_core"/>
</dbReference>
<dbReference type="InterPro" id="IPR018164">
    <property type="entry name" value="Ala-tRNA-synth_IIc_N"/>
</dbReference>
<dbReference type="InterPro" id="IPR050058">
    <property type="entry name" value="Ala-tRNA_ligase"/>
</dbReference>
<dbReference type="InterPro" id="IPR023033">
    <property type="entry name" value="Ala_tRNA_ligase_euk/bac"/>
</dbReference>
<dbReference type="InterPro" id="IPR027522">
    <property type="entry name" value="Ala_tRNA_synth_plant"/>
</dbReference>
<dbReference type="InterPro" id="IPR003156">
    <property type="entry name" value="DHHA1_dom"/>
</dbReference>
<dbReference type="InterPro" id="IPR018163">
    <property type="entry name" value="Thr/Ala-tRNA-synth_IIc_edit"/>
</dbReference>
<dbReference type="InterPro" id="IPR009000">
    <property type="entry name" value="Transl_B-barrel_sf"/>
</dbReference>
<dbReference type="InterPro" id="IPR012947">
    <property type="entry name" value="tRNA_SAD"/>
</dbReference>
<dbReference type="NCBIfam" id="TIGR00344">
    <property type="entry name" value="alaS"/>
    <property type="match status" value="1"/>
</dbReference>
<dbReference type="PANTHER" id="PTHR11777:SF9">
    <property type="entry name" value="ALANINE--TRNA LIGASE, CYTOPLASMIC"/>
    <property type="match status" value="1"/>
</dbReference>
<dbReference type="PANTHER" id="PTHR11777">
    <property type="entry name" value="ALANYL-TRNA SYNTHETASE"/>
    <property type="match status" value="1"/>
</dbReference>
<dbReference type="Pfam" id="PF02272">
    <property type="entry name" value="DHHA1"/>
    <property type="match status" value="1"/>
</dbReference>
<dbReference type="Pfam" id="PF01411">
    <property type="entry name" value="tRNA-synt_2c"/>
    <property type="match status" value="1"/>
</dbReference>
<dbReference type="Pfam" id="PF07973">
    <property type="entry name" value="tRNA_SAD"/>
    <property type="match status" value="1"/>
</dbReference>
<dbReference type="PRINTS" id="PR00980">
    <property type="entry name" value="TRNASYNTHALA"/>
</dbReference>
<dbReference type="SMART" id="SM00863">
    <property type="entry name" value="tRNA_SAD"/>
    <property type="match status" value="1"/>
</dbReference>
<dbReference type="SUPFAM" id="SSF55681">
    <property type="entry name" value="Class II aaRS and biotin synthetases"/>
    <property type="match status" value="1"/>
</dbReference>
<dbReference type="SUPFAM" id="SSF101353">
    <property type="entry name" value="Putative anticodon-binding domain of alanyl-tRNA synthetase (AlaRS)"/>
    <property type="match status" value="1"/>
</dbReference>
<dbReference type="SUPFAM" id="SSF55186">
    <property type="entry name" value="ThrRS/AlaRS common domain"/>
    <property type="match status" value="1"/>
</dbReference>
<dbReference type="SUPFAM" id="SSF50447">
    <property type="entry name" value="Translation proteins"/>
    <property type="match status" value="1"/>
</dbReference>
<dbReference type="PROSITE" id="PS50860">
    <property type="entry name" value="AA_TRNA_LIGASE_II_ALA"/>
    <property type="match status" value="1"/>
</dbReference>
<name>SYAP_MICPC</name>
<organism>
    <name type="scientific">Micromonas pusilla (strain CCMP1545)</name>
    <name type="common">Picoplanktonic green alga</name>
    <dbReference type="NCBI Taxonomy" id="564608"/>
    <lineage>
        <taxon>Eukaryota</taxon>
        <taxon>Viridiplantae</taxon>
        <taxon>Chlorophyta</taxon>
        <taxon>Mamiellophyceae</taxon>
        <taxon>Mamiellales</taxon>
        <taxon>Mamiellaceae</taxon>
        <taxon>Micromonas</taxon>
    </lineage>
</organism>
<sequence length="899" mass="95154">MRDADGKDISGAGIRRRFLEFYEARDHARLPSSSLVPEDPTVLLTIAGMLQFKPVFMGQEERKVPTATTTQKCVRTNDIENVGVTARHHTFFEMLGNFSFGDYFKKEAIAWAWEISTKEYGLDASRIWISVFREDDEAYAIWRDEIGIPENRIKRMDEADNFWAAGPTGPCGPCSELYWDFHPERGVDGSEDLDDDSRFIEFYNLVFMESVRDTDGNMKPLKRKNIDTGMGLERMAQILQGKPNNYETDLIRPIIDAAASMAGISYDDADDATKLKLKVIGDHTRAVCYLISDGVLPSNVGRGYIVRRLLRRVVRCGRLLGVKAPDGAGAFTPAIARVAIGLSEACDANVLKSSQKICDELEREELRFATTLGRGEEILADMLAAAKTKDANAPKLTGEDAFTLYDTYGFPLDITTDVATEAGVDVDVDGFEKAMAAARDLSRDARVAVDVTVGDLLGAIADELGEPTRFTGYGSVTEEGVKVRALLKGGERVASAGAGDTVEVVLDATPFYAEGGGQVGDEGEIILSDDRGKLVVGDCRKAAGGRLFVHSCVVSEGVVGEGDAVTATVSAASRRRAKANHTATHLLQSALKMTIGEDVSQAGSLVNFERLRFDFNAPSAPTPEELARVESLVNGWIGDAIDLTAEEMAISRAKEKGATAMFGEKYGDVVRVVDVPGVSMELCGGTHVKNTAEIGGFKILSESGIAAGVRRIEAVSGPGVVDLLQERDGTVKALAGSLRVPPEEIAGRVSALMEDLKTSQKEAEALRGELAVAKATALASQAIDAPGGAKVLVARMDGVDPAALKAAAESLVAALGDDVAVVLGSGGDDGKVGLVASFTEGVQKAGGLKAGVVLGATAKACGGGGGGKPGFAQAGGRDASALDAALEDAKKTIVDALSK</sequence>
<feature type="transit peptide" description="Chloroplast and mitochondrion">
    <location>
        <begin position="1"/>
        <end status="unknown"/>
    </location>
</feature>
<feature type="chain" id="PRO_0000402304" description="Alanine--tRNA ligase, chloroplastic/mitochondrial">
    <location>
        <begin status="unknown"/>
        <end position="899"/>
    </location>
</feature>
<feature type="binding site" evidence="1">
    <location>
        <position position="581"/>
    </location>
    <ligand>
        <name>Zn(2+)</name>
        <dbReference type="ChEBI" id="CHEBI:29105"/>
    </ligand>
</feature>
<feature type="binding site" evidence="1">
    <location>
        <position position="585"/>
    </location>
    <ligand>
        <name>Zn(2+)</name>
        <dbReference type="ChEBI" id="CHEBI:29105"/>
    </ligand>
</feature>
<feature type="binding site" evidence="1">
    <location>
        <position position="683"/>
    </location>
    <ligand>
        <name>Zn(2+)</name>
        <dbReference type="ChEBI" id="CHEBI:29105"/>
    </ligand>
</feature>
<feature type="binding site" evidence="1">
    <location>
        <position position="687"/>
    </location>
    <ligand>
        <name>Zn(2+)</name>
        <dbReference type="ChEBI" id="CHEBI:29105"/>
    </ligand>
</feature>
<gene>
    <name type="ORF">MICPUCDRAFT_16345</name>
</gene>
<reference key="1">
    <citation type="journal article" date="2009" name="Science">
        <title>Green evolution and dynamic adaptations revealed by genomes of the marine picoeukaryotes Micromonas.</title>
        <authorList>
            <person name="Worden A.Z."/>
            <person name="Lee J.H."/>
            <person name="Mock T."/>
            <person name="Rouze P."/>
            <person name="Simmons M.P."/>
            <person name="Aerts A.L."/>
            <person name="Allen A.E."/>
            <person name="Cuvelier M.L."/>
            <person name="Derelle E."/>
            <person name="Everett M.V."/>
            <person name="Foulon E."/>
            <person name="Grimwood J."/>
            <person name="Gundlach H."/>
            <person name="Henrissat B."/>
            <person name="Napoli C."/>
            <person name="McDonald S.M."/>
            <person name="Parker M.S."/>
            <person name="Rombauts S."/>
            <person name="Salamov A."/>
            <person name="Von Dassow P."/>
            <person name="Badger J.H."/>
            <person name="Coutinho P.M."/>
            <person name="Demir E."/>
            <person name="Dubchak I."/>
            <person name="Gentemann C."/>
            <person name="Eikrem W."/>
            <person name="Gready J.E."/>
            <person name="John U."/>
            <person name="Lanier W."/>
            <person name="Lindquist E.A."/>
            <person name="Lucas S."/>
            <person name="Mayer K.F."/>
            <person name="Moreau H."/>
            <person name="Not F."/>
            <person name="Otillar R."/>
            <person name="Panaud O."/>
            <person name="Pangilinan J."/>
            <person name="Paulsen I."/>
            <person name="Piegu B."/>
            <person name="Poliakov A."/>
            <person name="Robbens S."/>
            <person name="Schmutz J."/>
            <person name="Toulza E."/>
            <person name="Wyss T."/>
            <person name="Zelensky A."/>
            <person name="Zhou K."/>
            <person name="Armbrust E.V."/>
            <person name="Bhattacharya D."/>
            <person name="Goodenough U.W."/>
            <person name="Van de Peer Y."/>
            <person name="Grigoriev I.V."/>
        </authorList>
    </citation>
    <scope>NUCLEOTIDE SEQUENCE [LARGE SCALE GENOMIC DNA]</scope>
    <source>
        <strain>CCMP1545</strain>
    </source>
</reference>
<protein>
    <recommendedName>
        <fullName evidence="1">Alanine--tRNA ligase, chloroplastic/mitochondrial</fullName>
        <ecNumber evidence="1">6.1.1.7</ecNumber>
    </recommendedName>
    <alternativeName>
        <fullName evidence="1">Alanyl-tRNA synthetase</fullName>
        <shortName evidence="1">AlaRS</shortName>
    </alternativeName>
</protein>
<keyword id="KW-0030">Aminoacyl-tRNA synthetase</keyword>
<keyword id="KW-0067">ATP-binding</keyword>
<keyword id="KW-0150">Chloroplast</keyword>
<keyword id="KW-0436">Ligase</keyword>
<keyword id="KW-0479">Metal-binding</keyword>
<keyword id="KW-0496">Mitochondrion</keyword>
<keyword id="KW-0547">Nucleotide-binding</keyword>
<keyword id="KW-0934">Plastid</keyword>
<keyword id="KW-0648">Protein biosynthesis</keyword>
<keyword id="KW-1185">Reference proteome</keyword>
<keyword id="KW-0694">RNA-binding</keyword>
<keyword id="KW-0809">Transit peptide</keyword>
<keyword id="KW-0820">tRNA-binding</keyword>
<keyword id="KW-0862">Zinc</keyword>